<protein>
    <recommendedName>
        <fullName evidence="1">Large ribosomal subunit protein uL6</fullName>
    </recommendedName>
    <alternativeName>
        <fullName evidence="2">50S ribosomal protein L6</fullName>
    </alternativeName>
</protein>
<sequence length="178" mass="19787">MSRVGKKIIDIPSDVTVTFDGNHVTVKGPKGELSRTLNERMTFKQEENTIEVVRPSDSKEDRTNHGTTRALLNNMVQGVSQGYVKVLELVGVGYRAQMQGKDLILNVGYSHPVEIKAEENITFSVEKNTVVKVEGISKEQVGALASNIRSVRPPEPYKGKGIRYQGEYVRRKEGKTGK</sequence>
<feature type="chain" id="PRO_0000223989" description="Large ribosomal subunit protein uL6">
    <location>
        <begin position="1"/>
        <end position="178"/>
    </location>
</feature>
<dbReference type="EMBL" id="BA000033">
    <property type="protein sequence ID" value="BAB96019.1"/>
    <property type="molecule type" value="Genomic_DNA"/>
</dbReference>
<dbReference type="RefSeq" id="WP_000091975.1">
    <property type="nucleotide sequence ID" value="NC_003923.1"/>
</dbReference>
<dbReference type="PDB" id="8Y36">
    <property type="method" value="EM"/>
    <property type="resolution" value="2.65 A"/>
    <property type="chains" value="G=2-176"/>
</dbReference>
<dbReference type="PDB" id="8Y37">
    <property type="method" value="EM"/>
    <property type="resolution" value="2.53 A"/>
    <property type="chains" value="G=2-176"/>
</dbReference>
<dbReference type="PDB" id="8Y38">
    <property type="method" value="EM"/>
    <property type="resolution" value="2.58 A"/>
    <property type="chains" value="G=2-176"/>
</dbReference>
<dbReference type="PDB" id="8Y39">
    <property type="method" value="EM"/>
    <property type="resolution" value="3.60 A"/>
    <property type="chains" value="G=2-176"/>
</dbReference>
<dbReference type="PDBsum" id="8Y36"/>
<dbReference type="PDBsum" id="8Y37"/>
<dbReference type="PDBsum" id="8Y38"/>
<dbReference type="PDBsum" id="8Y39"/>
<dbReference type="EMDB" id="EMD-38873"/>
<dbReference type="EMDB" id="EMD-38874"/>
<dbReference type="EMDB" id="EMD-38875"/>
<dbReference type="EMDB" id="EMD-38876"/>
<dbReference type="SMR" id="Q7A084"/>
<dbReference type="KEGG" id="sam:MW2154"/>
<dbReference type="HOGENOM" id="CLU_065464_1_2_9"/>
<dbReference type="GO" id="GO:0022625">
    <property type="term" value="C:cytosolic large ribosomal subunit"/>
    <property type="evidence" value="ECO:0007669"/>
    <property type="project" value="TreeGrafter"/>
</dbReference>
<dbReference type="GO" id="GO:0019843">
    <property type="term" value="F:rRNA binding"/>
    <property type="evidence" value="ECO:0007669"/>
    <property type="project" value="UniProtKB-UniRule"/>
</dbReference>
<dbReference type="GO" id="GO:0003735">
    <property type="term" value="F:structural constituent of ribosome"/>
    <property type="evidence" value="ECO:0007669"/>
    <property type="project" value="InterPro"/>
</dbReference>
<dbReference type="GO" id="GO:0002181">
    <property type="term" value="P:cytoplasmic translation"/>
    <property type="evidence" value="ECO:0007669"/>
    <property type="project" value="TreeGrafter"/>
</dbReference>
<dbReference type="FunFam" id="3.90.930.12:FF:000001">
    <property type="entry name" value="50S ribosomal protein L6"/>
    <property type="match status" value="1"/>
</dbReference>
<dbReference type="FunFam" id="3.90.930.12:FF:000002">
    <property type="entry name" value="50S ribosomal protein L6"/>
    <property type="match status" value="1"/>
</dbReference>
<dbReference type="Gene3D" id="3.90.930.12">
    <property type="entry name" value="Ribosomal protein L6, alpha-beta domain"/>
    <property type="match status" value="2"/>
</dbReference>
<dbReference type="HAMAP" id="MF_01365_B">
    <property type="entry name" value="Ribosomal_uL6_B"/>
    <property type="match status" value="1"/>
</dbReference>
<dbReference type="InterPro" id="IPR000702">
    <property type="entry name" value="Ribosomal_uL6-like"/>
</dbReference>
<dbReference type="InterPro" id="IPR036789">
    <property type="entry name" value="Ribosomal_uL6-like_a/b-dom_sf"/>
</dbReference>
<dbReference type="InterPro" id="IPR020040">
    <property type="entry name" value="Ribosomal_uL6_a/b-dom"/>
</dbReference>
<dbReference type="InterPro" id="IPR019906">
    <property type="entry name" value="Ribosomal_uL6_bac-type"/>
</dbReference>
<dbReference type="InterPro" id="IPR002358">
    <property type="entry name" value="Ribosomal_uL6_CS"/>
</dbReference>
<dbReference type="NCBIfam" id="TIGR03654">
    <property type="entry name" value="L6_bact"/>
    <property type="match status" value="1"/>
</dbReference>
<dbReference type="PANTHER" id="PTHR11655">
    <property type="entry name" value="60S/50S RIBOSOMAL PROTEIN L6/L9"/>
    <property type="match status" value="1"/>
</dbReference>
<dbReference type="PANTHER" id="PTHR11655:SF14">
    <property type="entry name" value="LARGE RIBOSOMAL SUBUNIT PROTEIN UL6M"/>
    <property type="match status" value="1"/>
</dbReference>
<dbReference type="Pfam" id="PF00347">
    <property type="entry name" value="Ribosomal_L6"/>
    <property type="match status" value="2"/>
</dbReference>
<dbReference type="PIRSF" id="PIRSF002162">
    <property type="entry name" value="Ribosomal_L6"/>
    <property type="match status" value="1"/>
</dbReference>
<dbReference type="PRINTS" id="PR00059">
    <property type="entry name" value="RIBOSOMALL6"/>
</dbReference>
<dbReference type="SUPFAM" id="SSF56053">
    <property type="entry name" value="Ribosomal protein L6"/>
    <property type="match status" value="2"/>
</dbReference>
<dbReference type="PROSITE" id="PS00525">
    <property type="entry name" value="RIBOSOMAL_L6_1"/>
    <property type="match status" value="1"/>
</dbReference>
<gene>
    <name evidence="1" type="primary">rplF</name>
    <name type="ordered locus">MW2154</name>
</gene>
<proteinExistence type="evidence at protein level"/>
<evidence type="ECO:0000255" key="1">
    <source>
        <dbReference type="HAMAP-Rule" id="MF_01365"/>
    </source>
</evidence>
<evidence type="ECO:0000305" key="2"/>
<comment type="function">
    <text evidence="1">This protein binds to the 23S rRNA, and is important in its secondary structure. It is located near the subunit interface in the base of the L7/L12 stalk, and near the tRNA binding site of the peptidyltransferase center.</text>
</comment>
<comment type="subunit">
    <text evidence="1">Part of the 50S ribosomal subunit.</text>
</comment>
<comment type="similarity">
    <text evidence="1">Belongs to the universal ribosomal protein uL6 family.</text>
</comment>
<accession>Q7A084</accession>
<name>RL6_STAAW</name>
<reference key="1">
    <citation type="journal article" date="2002" name="Lancet">
        <title>Genome and virulence determinants of high virulence community-acquired MRSA.</title>
        <authorList>
            <person name="Baba T."/>
            <person name="Takeuchi F."/>
            <person name="Kuroda M."/>
            <person name="Yuzawa H."/>
            <person name="Aoki K."/>
            <person name="Oguchi A."/>
            <person name="Nagai Y."/>
            <person name="Iwama N."/>
            <person name="Asano K."/>
            <person name="Naimi T."/>
            <person name="Kuroda H."/>
            <person name="Cui L."/>
            <person name="Yamamoto K."/>
            <person name="Hiramatsu K."/>
        </authorList>
    </citation>
    <scope>NUCLEOTIDE SEQUENCE [LARGE SCALE GENOMIC DNA]</scope>
    <source>
        <strain>MW2</strain>
    </source>
</reference>
<organism>
    <name type="scientific">Staphylococcus aureus (strain MW2)</name>
    <dbReference type="NCBI Taxonomy" id="196620"/>
    <lineage>
        <taxon>Bacteria</taxon>
        <taxon>Bacillati</taxon>
        <taxon>Bacillota</taxon>
        <taxon>Bacilli</taxon>
        <taxon>Bacillales</taxon>
        <taxon>Staphylococcaceae</taxon>
        <taxon>Staphylococcus</taxon>
    </lineage>
</organism>
<keyword id="KW-0002">3D-structure</keyword>
<keyword id="KW-0687">Ribonucleoprotein</keyword>
<keyword id="KW-0689">Ribosomal protein</keyword>
<keyword id="KW-0694">RNA-binding</keyword>
<keyword id="KW-0699">rRNA-binding</keyword>